<gene>
    <name evidence="6" type="primary">sstT</name>
    <name type="synonym">ygjU</name>
    <name type="ordered locus">b3089</name>
    <name type="ordered locus">JW3060</name>
</gene>
<evidence type="ECO:0000255" key="1"/>
<evidence type="ECO:0000255" key="2">
    <source>
        <dbReference type="HAMAP-Rule" id="MF_01582"/>
    </source>
</evidence>
<evidence type="ECO:0000269" key="3">
    <source>
    </source>
</evidence>
<evidence type="ECO:0000269" key="4">
    <source>
    </source>
</evidence>
<evidence type="ECO:0000269" key="5">
    <source>
    </source>
</evidence>
<evidence type="ECO:0000303" key="6">
    <source>
    </source>
</evidence>
<evidence type="ECO:0000305" key="7"/>
<comment type="function">
    <text evidence="2 3 5">Involved in the import of serine and threonine into the cell, with the concomitant import of sodium (symport system).</text>
</comment>
<comment type="catalytic activity">
    <reaction evidence="2 3 5">
        <text>L-serine(in) + Na(+)(in) = L-serine(out) + Na(+)(out)</text>
        <dbReference type="Rhea" id="RHEA:29575"/>
        <dbReference type="ChEBI" id="CHEBI:29101"/>
        <dbReference type="ChEBI" id="CHEBI:33384"/>
    </reaction>
    <physiologicalReaction direction="right-to-left" evidence="2 3 5">
        <dbReference type="Rhea" id="RHEA:29577"/>
    </physiologicalReaction>
</comment>
<comment type="catalytic activity">
    <reaction evidence="2 3 5">
        <text>L-threonine(in) + Na(+)(in) = L-threonine(out) + Na(+)(out)</text>
        <dbReference type="Rhea" id="RHEA:69999"/>
        <dbReference type="ChEBI" id="CHEBI:29101"/>
        <dbReference type="ChEBI" id="CHEBI:57926"/>
    </reaction>
    <physiologicalReaction direction="right-to-left" evidence="2 3 5">
        <dbReference type="Rhea" id="RHEA:70001"/>
    </physiologicalReaction>
</comment>
<comment type="activity regulation">
    <text evidence="3">Activated by valinomycin and inhibited by monensin.</text>
</comment>
<comment type="biophysicochemical properties">
    <kinetics>
        <KM evidence="3">0.82 uM for serine</KM>
        <Vmax evidence="3">0.37 umol/min/mg enzyme</Vmax>
    </kinetics>
    <phDependence>
        <text evidence="3">Optimum pH is 7.0.</text>
    </phDependence>
    <temperatureDependence>
        <text evidence="3">Optimum temperature is 40 degrees Celsius.</text>
    </temperatureDependence>
</comment>
<comment type="subcellular location">
    <subcellularLocation>
        <location evidence="2 4">Cell inner membrane</location>
        <topology evidence="2">Multi-pass membrane protein</topology>
    </subcellularLocation>
</comment>
<comment type="induction">
    <text evidence="5">Repressed by tryptophan.</text>
</comment>
<comment type="similarity">
    <text evidence="2 7">Belongs to the dicarboxylate/amino acid:cation symporter (DAACS) (TC 2.A.23) family.</text>
</comment>
<proteinExistence type="evidence at protein level"/>
<dbReference type="EMBL" id="U18997">
    <property type="protein sequence ID" value="AAA57891.1"/>
    <property type="molecule type" value="Genomic_DNA"/>
</dbReference>
<dbReference type="EMBL" id="U00096">
    <property type="protein sequence ID" value="AAC76124.1"/>
    <property type="molecule type" value="Genomic_DNA"/>
</dbReference>
<dbReference type="EMBL" id="AP009048">
    <property type="protein sequence ID" value="BAE77139.1"/>
    <property type="molecule type" value="Genomic_DNA"/>
</dbReference>
<dbReference type="EMBL" id="D13328">
    <property type="status" value="NOT_ANNOTATED_CDS"/>
    <property type="molecule type" value="Genomic_DNA"/>
</dbReference>
<dbReference type="PIR" id="F65097">
    <property type="entry name" value="F65097"/>
</dbReference>
<dbReference type="RefSeq" id="NP_417560.1">
    <property type="nucleotide sequence ID" value="NC_000913.3"/>
</dbReference>
<dbReference type="RefSeq" id="WP_000211655.1">
    <property type="nucleotide sequence ID" value="NZ_STEB01000001.1"/>
</dbReference>
<dbReference type="SMR" id="P0AGE4"/>
<dbReference type="BioGRID" id="4260951">
    <property type="interactions" value="17"/>
</dbReference>
<dbReference type="FunCoup" id="P0AGE4">
    <property type="interactions" value="69"/>
</dbReference>
<dbReference type="STRING" id="511145.b3089"/>
<dbReference type="TCDB" id="2.A.23.1.13">
    <property type="family name" value="the dicarboxylate/amino acid:cation (na(+) or h(+)) symporter (daacs) family"/>
</dbReference>
<dbReference type="PaxDb" id="511145-b3089"/>
<dbReference type="EnsemblBacteria" id="AAC76124">
    <property type="protein sequence ID" value="AAC76124"/>
    <property type="gene ID" value="b3089"/>
</dbReference>
<dbReference type="GeneID" id="93778898"/>
<dbReference type="GeneID" id="947605"/>
<dbReference type="KEGG" id="ecj:JW3060"/>
<dbReference type="KEGG" id="eco:b3089"/>
<dbReference type="KEGG" id="ecoc:C3026_16870"/>
<dbReference type="PATRIC" id="fig|1411691.4.peg.3640"/>
<dbReference type="EchoBASE" id="EB2590"/>
<dbReference type="eggNOG" id="COG3633">
    <property type="taxonomic scope" value="Bacteria"/>
</dbReference>
<dbReference type="HOGENOM" id="CLU_044581_0_0_6"/>
<dbReference type="InParanoid" id="P0AGE4"/>
<dbReference type="OMA" id="YIGILTW"/>
<dbReference type="OrthoDB" id="9768885at2"/>
<dbReference type="PhylomeDB" id="P0AGE4"/>
<dbReference type="BioCyc" id="EcoCyc:YGJU-MONOMER"/>
<dbReference type="BioCyc" id="MetaCyc:YGJU-MONOMER"/>
<dbReference type="PRO" id="PR:P0AGE4"/>
<dbReference type="Proteomes" id="UP000000625">
    <property type="component" value="Chromosome"/>
</dbReference>
<dbReference type="GO" id="GO:0005886">
    <property type="term" value="C:plasma membrane"/>
    <property type="evidence" value="ECO:0000314"/>
    <property type="project" value="EcoCyc"/>
</dbReference>
<dbReference type="GO" id="GO:0015194">
    <property type="term" value="F:L-serine transmembrane transporter activity"/>
    <property type="evidence" value="ECO:0000314"/>
    <property type="project" value="EcoCyc"/>
</dbReference>
<dbReference type="GO" id="GO:0015195">
    <property type="term" value="F:L-threonine transmembrane transporter activity"/>
    <property type="evidence" value="ECO:0000314"/>
    <property type="project" value="EcoCyc"/>
</dbReference>
<dbReference type="GO" id="GO:0015175">
    <property type="term" value="F:neutral L-amino acid transmembrane transporter activity"/>
    <property type="evidence" value="ECO:0000314"/>
    <property type="project" value="EcoliWiki"/>
</dbReference>
<dbReference type="GO" id="GO:0005295">
    <property type="term" value="F:neutral L-amino acid:sodium symporter activity"/>
    <property type="evidence" value="ECO:0000314"/>
    <property type="project" value="EcoliWiki"/>
</dbReference>
<dbReference type="GO" id="GO:0006865">
    <property type="term" value="P:amino acid transport"/>
    <property type="evidence" value="ECO:0000314"/>
    <property type="project" value="EcoliWiki"/>
</dbReference>
<dbReference type="GO" id="GO:0015825">
    <property type="term" value="P:L-serine transport"/>
    <property type="evidence" value="ECO:0000314"/>
    <property type="project" value="EcoCyc"/>
</dbReference>
<dbReference type="GO" id="GO:0032329">
    <property type="term" value="P:serine transport"/>
    <property type="evidence" value="ECO:0000314"/>
    <property type="project" value="EcoliWiki"/>
</dbReference>
<dbReference type="GO" id="GO:0015826">
    <property type="term" value="P:threonine transport"/>
    <property type="evidence" value="ECO:0000314"/>
    <property type="project" value="EcoCyc"/>
</dbReference>
<dbReference type="FunFam" id="1.10.3860.10:FF:000003">
    <property type="entry name" value="Serine/threonine transporter sstT"/>
    <property type="match status" value="1"/>
</dbReference>
<dbReference type="Gene3D" id="1.10.3860.10">
    <property type="entry name" value="Sodium:dicarboxylate symporter"/>
    <property type="match status" value="1"/>
</dbReference>
<dbReference type="HAMAP" id="MF_01582">
    <property type="entry name" value="Ser_Thr_transp_SstT"/>
    <property type="match status" value="1"/>
</dbReference>
<dbReference type="InterPro" id="IPR001991">
    <property type="entry name" value="Na-dicarboxylate_symporter"/>
</dbReference>
<dbReference type="InterPro" id="IPR036458">
    <property type="entry name" value="Na:dicarbo_symporter_sf"/>
</dbReference>
<dbReference type="InterPro" id="IPR023025">
    <property type="entry name" value="Ser_Thr_transp_SstT"/>
</dbReference>
<dbReference type="NCBIfam" id="NF010151">
    <property type="entry name" value="PRK13628.1"/>
    <property type="match status" value="1"/>
</dbReference>
<dbReference type="PANTHER" id="PTHR42865">
    <property type="entry name" value="PROTON/GLUTAMATE-ASPARTATE SYMPORTER"/>
    <property type="match status" value="1"/>
</dbReference>
<dbReference type="PANTHER" id="PTHR42865:SF8">
    <property type="entry name" value="SERINE_THREONINE TRANSPORTER SSTT"/>
    <property type="match status" value="1"/>
</dbReference>
<dbReference type="Pfam" id="PF00375">
    <property type="entry name" value="SDF"/>
    <property type="match status" value="1"/>
</dbReference>
<dbReference type="PRINTS" id="PR00173">
    <property type="entry name" value="EDTRNSPORT"/>
</dbReference>
<dbReference type="SUPFAM" id="SSF118215">
    <property type="entry name" value="Proton glutamate symport protein"/>
    <property type="match status" value="1"/>
</dbReference>
<dbReference type="PROSITE" id="PS00713">
    <property type="entry name" value="NA_DICARBOXYL_SYMP_1"/>
    <property type="match status" value="1"/>
</dbReference>
<keyword id="KW-0029">Amino-acid transport</keyword>
<keyword id="KW-0997">Cell inner membrane</keyword>
<keyword id="KW-1003">Cell membrane</keyword>
<keyword id="KW-0903">Direct protein sequencing</keyword>
<keyword id="KW-0472">Membrane</keyword>
<keyword id="KW-1185">Reference proteome</keyword>
<keyword id="KW-0769">Symport</keyword>
<keyword id="KW-0812">Transmembrane</keyword>
<keyword id="KW-1133">Transmembrane helix</keyword>
<keyword id="KW-0813">Transport</keyword>
<protein>
    <recommendedName>
        <fullName>Serine/threonine transporter SstT</fullName>
    </recommendedName>
    <alternativeName>
        <fullName>Na(+)/serine-threonine symporter</fullName>
    </alternativeName>
</protein>
<reference key="1">
    <citation type="journal article" date="1997" name="Science">
        <title>The complete genome sequence of Escherichia coli K-12.</title>
        <authorList>
            <person name="Blattner F.R."/>
            <person name="Plunkett G. III"/>
            <person name="Bloch C.A."/>
            <person name="Perna N.T."/>
            <person name="Burland V."/>
            <person name="Riley M."/>
            <person name="Collado-Vides J."/>
            <person name="Glasner J.D."/>
            <person name="Rode C.K."/>
            <person name="Mayhew G.F."/>
            <person name="Gregor J."/>
            <person name="Davis N.W."/>
            <person name="Kirkpatrick H.A."/>
            <person name="Goeden M.A."/>
            <person name="Rose D.J."/>
            <person name="Mau B."/>
            <person name="Shao Y."/>
        </authorList>
    </citation>
    <scope>NUCLEOTIDE SEQUENCE [LARGE SCALE GENOMIC DNA]</scope>
    <source>
        <strain>K12 / MG1655 / ATCC 47076</strain>
    </source>
</reference>
<reference key="2">
    <citation type="journal article" date="2006" name="Mol. Syst. Biol.">
        <title>Highly accurate genome sequences of Escherichia coli K-12 strains MG1655 and W3110.</title>
        <authorList>
            <person name="Hayashi K."/>
            <person name="Morooka N."/>
            <person name="Yamamoto Y."/>
            <person name="Fujita K."/>
            <person name="Isono K."/>
            <person name="Choi S."/>
            <person name="Ohtsubo E."/>
            <person name="Baba T."/>
            <person name="Wanner B.L."/>
            <person name="Mori H."/>
            <person name="Horiuchi T."/>
        </authorList>
    </citation>
    <scope>NUCLEOTIDE SEQUENCE [LARGE SCALE GENOMIC DNA]</scope>
    <source>
        <strain>K12 / W3110 / ATCC 27325 / DSM 5911</strain>
    </source>
</reference>
<reference key="3">
    <citation type="journal article" date="2002" name="J. Biochem.">
        <title>Purification, reconstitution, and characterization of Na(+)/serine symporter, SstT, of Escherichia coli.</title>
        <authorList>
            <person name="Kim Y.-M."/>
            <person name="Ogawa W."/>
            <person name="Tamai E."/>
            <person name="Kuroda T."/>
            <person name="Mizushima T."/>
            <person name="Tsuchiya T."/>
        </authorList>
    </citation>
    <scope>PROTEIN SEQUENCE OF 2-11</scope>
    <scope>FUNCTION</scope>
    <scope>CATALYTIC ACTIVITY</scope>
    <scope>ACTIVITY REGULATION</scope>
    <scope>BIOPHYSICOCHEMICAL PROPERTIES</scope>
    <source>
        <strain>K12 / W3133</strain>
    </source>
</reference>
<reference key="4">
    <citation type="submission" date="1992-09" db="EMBL/GenBank/DDBJ databases">
        <authorList>
            <person name="Mizobuchi K."/>
        </authorList>
    </citation>
    <scope>NUCLEOTIDE SEQUENCE [GENOMIC DNA] OF 268-414</scope>
    <source>
        <strain>K12 / W3110 / ATCC 27325 / DSM 5911</strain>
    </source>
</reference>
<reference key="5">
    <citation type="journal article" date="1998" name="J. Bacteriol.">
        <title>Cloning and expression of the gene for the Na+-coupled serine transporter from Escherichia coli and characteristics of the transporter.</title>
        <authorList>
            <person name="Ogawa W."/>
            <person name="Kim Y.-M."/>
            <person name="Mizushima T."/>
            <person name="Tsuchiya T."/>
        </authorList>
    </citation>
    <scope>FUNCTION</scope>
    <scope>CATALYTIC ACTIVITY</scope>
    <scope>INDUCTION</scope>
    <source>
        <strain>K12 / W3133</strain>
    </source>
</reference>
<reference key="6">
    <citation type="journal article" date="2005" name="Science">
        <title>Global topology analysis of the Escherichia coli inner membrane proteome.</title>
        <authorList>
            <person name="Daley D.O."/>
            <person name="Rapp M."/>
            <person name="Granseth E."/>
            <person name="Melen K."/>
            <person name="Drew D."/>
            <person name="von Heijne G."/>
        </authorList>
    </citation>
    <scope>TOPOLOGY [LARGE SCALE ANALYSIS]</scope>
    <scope>SUBCELLULAR LOCATION</scope>
    <source>
        <strain>K12 / MG1655 / ATCC 47076</strain>
    </source>
</reference>
<organism>
    <name type="scientific">Escherichia coli (strain K12)</name>
    <dbReference type="NCBI Taxonomy" id="83333"/>
    <lineage>
        <taxon>Bacteria</taxon>
        <taxon>Pseudomonadati</taxon>
        <taxon>Pseudomonadota</taxon>
        <taxon>Gammaproteobacteria</taxon>
        <taxon>Enterobacterales</taxon>
        <taxon>Enterobacteriaceae</taxon>
        <taxon>Escherichia</taxon>
    </lineage>
</organism>
<name>SSTT_ECOLI</name>
<feature type="initiator methionine" description="Removed" evidence="2 3">
    <location>
        <position position="1"/>
    </location>
</feature>
<feature type="chain" id="PRO_0000202118" description="Serine/threonine transporter SstT">
    <location>
        <begin position="2"/>
        <end position="414"/>
    </location>
</feature>
<feature type="topological domain" description="Cytoplasmic" evidence="1">
    <location>
        <begin position="2"/>
        <end position="15"/>
    </location>
</feature>
<feature type="transmembrane region" description="Helical" evidence="1">
    <location>
        <begin position="16"/>
        <end position="36"/>
    </location>
</feature>
<feature type="topological domain" description="Periplasmic" evidence="1">
    <location>
        <begin position="37"/>
        <end position="45"/>
    </location>
</feature>
<feature type="transmembrane region" description="Helical" evidence="1">
    <location>
        <begin position="46"/>
        <end position="66"/>
    </location>
</feature>
<feature type="topological domain" description="Cytoplasmic" evidence="1">
    <location>
        <begin position="67"/>
        <end position="83"/>
    </location>
</feature>
<feature type="transmembrane region" description="Helical" evidence="1">
    <location>
        <begin position="84"/>
        <end position="104"/>
    </location>
</feature>
<feature type="topological domain" description="Periplasmic" evidence="1">
    <location>
        <begin position="105"/>
        <end position="142"/>
    </location>
</feature>
<feature type="transmembrane region" description="Helical" evidence="1">
    <location>
        <begin position="143"/>
        <end position="163"/>
    </location>
</feature>
<feature type="topological domain" description="Cytoplasmic" evidence="1">
    <location>
        <begin position="164"/>
        <end position="179"/>
    </location>
</feature>
<feature type="transmembrane region" description="Helical" evidence="1">
    <location>
        <begin position="180"/>
        <end position="200"/>
    </location>
</feature>
<feature type="topological domain" description="Periplasmic" evidence="1">
    <location>
        <begin position="201"/>
        <end position="217"/>
    </location>
</feature>
<feature type="transmembrane region" description="Helical" evidence="1">
    <location>
        <begin position="218"/>
        <end position="238"/>
    </location>
</feature>
<feature type="topological domain" description="Cytoplasmic" evidence="1">
    <location>
        <begin position="239"/>
        <end position="299"/>
    </location>
</feature>
<feature type="transmembrane region" description="Helical" evidence="1">
    <location>
        <begin position="300"/>
        <end position="320"/>
    </location>
</feature>
<feature type="topological domain" description="Periplasmic" evidence="1">
    <location>
        <begin position="321"/>
        <end position="331"/>
    </location>
</feature>
<feature type="transmembrane region" description="Helical" evidence="1">
    <location>
        <begin position="332"/>
        <end position="352"/>
    </location>
</feature>
<feature type="topological domain" description="Cytoplasmic" evidence="4">
    <location>
        <begin position="353"/>
        <end position="414"/>
    </location>
</feature>
<accession>P0AGE4</accession>
<accession>P42602</accession>
<accession>Q2M9B7</accession>
<sequence length="414" mass="43478">MTTQRSPGLFRRLAHGSLVKQILVGLVLGILLAWISKPAAEAVGLLGTLFVGALKAVAPILVLMLVMASIANHQHGQKTNIRPILFLYLLGTFSAALAAVVFSFAFPSTLHLSSSAGDISPPSGIVEVMRGLVMSMVSNPIDALLKGNYIGILVWAIGLGFALRHGNETTKNLVNDMSNAVTFMVKLVIRFAPIGIFGLVSSTLATTGFSTLWGYAQLLVVLVGCMLLVALVVNPLLVWWKIRRNPFPLVLLCLRESGVYAFFTRSSAANIPVNMALCEKLNLDRDTYSVSIPLGATINMAGAAITITVLTLAAVNTLGIPVDLPTALLLSVVASLCACGASGVAGGSLLLIPLACNMFGISNDIAMQVVAVGFIIGVLQDSCETALNSSTDVLFTAAACQAEDDRLANSALRN</sequence>